<accession>Q8SM04</accession>
<evidence type="ECO:0000255" key="1">
    <source>
        <dbReference type="HAMAP-Rule" id="MF_01390"/>
    </source>
</evidence>
<protein>
    <recommendedName>
        <fullName evidence="1">Maturase K</fullName>
    </recommendedName>
    <alternativeName>
        <fullName evidence="1">Intron maturase</fullName>
    </alternativeName>
</protein>
<organism>
    <name type="scientific">Penstemon heterophyllus</name>
    <name type="common">Foothill penstemon</name>
    <dbReference type="NCBI Taxonomy" id="160372"/>
    <lineage>
        <taxon>Eukaryota</taxon>
        <taxon>Viridiplantae</taxon>
        <taxon>Streptophyta</taxon>
        <taxon>Embryophyta</taxon>
        <taxon>Tracheophyta</taxon>
        <taxon>Spermatophyta</taxon>
        <taxon>Magnoliopsida</taxon>
        <taxon>eudicotyledons</taxon>
        <taxon>Gunneridae</taxon>
        <taxon>Pentapetalae</taxon>
        <taxon>asterids</taxon>
        <taxon>lamiids</taxon>
        <taxon>Lamiales</taxon>
        <taxon>Plantaginaceae</taxon>
        <taxon>Cheloneae</taxon>
        <taxon>Penstemon</taxon>
    </lineage>
</organism>
<sequence length="510" mass="60296">MEEIQRYLQLKRSQQHNFLYPLIFQEYIYAFAHDRSFSRSILSEKTGYEKKSSLLIVKRVITRMYQQNPFIIFLNDSTQNKFLGHNNNFYSQLISEGFAFIVEIPFFLRLISSREGKKKKIVKSQNLRSIHSIFPFLEDSFSHLNFLLDILIPHPVHVEILVQTLRYWVKDASSLHLIRFLLNEYCNSNCVFIPKKASSSFSNSKRNQRLFLFLYNSHVCEYESIFFFLRNQSSRLRSTSSRVLLERIYFYGKIEHLVNVVVKVKDFQANLWLVKEPCMHYVRYQRKAILASKGTSLFMNKWKCFLVTFWQWHFSLWFHPRRIYINQLSKNFLECLGYLSSVQMNPSVVRSQILENSFLINNAIKKFDTLVPIIPLIASLANTKFCNVLGHPISKPVWADLSDSHIIDRFGRICRNLSHYHSGSSKKKSLYRIKYILRLSCARTLARKHKSTVRAFFKRLGSELLEEFLMSEEDVLFLTFPKASSTLRGVSKSRIWYLDILCISDLVNYK</sequence>
<keyword id="KW-0150">Chloroplast</keyword>
<keyword id="KW-0507">mRNA processing</keyword>
<keyword id="KW-0934">Plastid</keyword>
<keyword id="KW-0694">RNA-binding</keyword>
<keyword id="KW-0819">tRNA processing</keyword>
<dbReference type="EMBL" id="AF375219">
    <property type="protein sequence ID" value="AAM19391.1"/>
    <property type="molecule type" value="Genomic_DNA"/>
</dbReference>
<dbReference type="GO" id="GO:0009507">
    <property type="term" value="C:chloroplast"/>
    <property type="evidence" value="ECO:0007669"/>
    <property type="project" value="UniProtKB-SubCell"/>
</dbReference>
<dbReference type="GO" id="GO:0003723">
    <property type="term" value="F:RNA binding"/>
    <property type="evidence" value="ECO:0007669"/>
    <property type="project" value="UniProtKB-KW"/>
</dbReference>
<dbReference type="GO" id="GO:0006397">
    <property type="term" value="P:mRNA processing"/>
    <property type="evidence" value="ECO:0007669"/>
    <property type="project" value="UniProtKB-KW"/>
</dbReference>
<dbReference type="GO" id="GO:0008380">
    <property type="term" value="P:RNA splicing"/>
    <property type="evidence" value="ECO:0007669"/>
    <property type="project" value="UniProtKB-UniRule"/>
</dbReference>
<dbReference type="GO" id="GO:0008033">
    <property type="term" value="P:tRNA processing"/>
    <property type="evidence" value="ECO:0007669"/>
    <property type="project" value="UniProtKB-KW"/>
</dbReference>
<dbReference type="HAMAP" id="MF_01390">
    <property type="entry name" value="MatK"/>
    <property type="match status" value="1"/>
</dbReference>
<dbReference type="InterPro" id="IPR024937">
    <property type="entry name" value="Domain_X"/>
</dbReference>
<dbReference type="InterPro" id="IPR002866">
    <property type="entry name" value="Maturase_MatK"/>
</dbReference>
<dbReference type="InterPro" id="IPR024942">
    <property type="entry name" value="Maturase_MatK_N"/>
</dbReference>
<dbReference type="PANTHER" id="PTHR34811">
    <property type="entry name" value="MATURASE K"/>
    <property type="match status" value="1"/>
</dbReference>
<dbReference type="PANTHER" id="PTHR34811:SF1">
    <property type="entry name" value="MATURASE K"/>
    <property type="match status" value="1"/>
</dbReference>
<dbReference type="Pfam" id="PF01348">
    <property type="entry name" value="Intron_maturas2"/>
    <property type="match status" value="1"/>
</dbReference>
<dbReference type="Pfam" id="PF01824">
    <property type="entry name" value="MatK_N"/>
    <property type="match status" value="1"/>
</dbReference>
<geneLocation type="chloroplast"/>
<reference key="1">
    <citation type="journal article" date="2002" name="Syst. Bot.">
        <title>A phylogenetic and biogeographic analysis of the Cheloneae (Scrophulariaceae) based on ITS and matK sequence data.</title>
        <authorList>
            <person name="Wolfe A.D."/>
            <person name="Datwyler S.L."/>
            <person name="Randle C.P."/>
        </authorList>
        <dbReference type="AGRICOLA" id="IND23289696"/>
    </citation>
    <scope>NUCLEOTIDE SEQUENCE [GENOMIC DNA]</scope>
</reference>
<comment type="function">
    <text evidence="1">Usually encoded in the trnK tRNA gene intron. Probably assists in splicing its own and other chloroplast group II introns.</text>
</comment>
<comment type="subcellular location">
    <subcellularLocation>
        <location>Plastid</location>
        <location>Chloroplast</location>
    </subcellularLocation>
</comment>
<comment type="similarity">
    <text evidence="1">Belongs to the intron maturase 2 family. MatK subfamily.</text>
</comment>
<gene>
    <name evidence="1" type="primary">matK</name>
</gene>
<name>MATK_PENHE</name>
<feature type="chain" id="PRO_0000143579" description="Maturase K">
    <location>
        <begin position="1"/>
        <end position="510"/>
    </location>
</feature>
<proteinExistence type="inferred from homology"/>